<reference key="1">
    <citation type="journal article" date="2009" name="PLoS ONE">
        <title>Salmonella paratyphi C: genetic divergence from Salmonella choleraesuis and pathogenic convergence with Salmonella typhi.</title>
        <authorList>
            <person name="Liu W.-Q."/>
            <person name="Feng Y."/>
            <person name="Wang Y."/>
            <person name="Zou Q.-H."/>
            <person name="Chen F."/>
            <person name="Guo J.-T."/>
            <person name="Peng Y.-H."/>
            <person name="Jin Y."/>
            <person name="Li Y.-G."/>
            <person name="Hu S.-N."/>
            <person name="Johnston R.N."/>
            <person name="Liu G.-R."/>
            <person name="Liu S.-L."/>
        </authorList>
    </citation>
    <scope>NUCLEOTIDE SEQUENCE [LARGE SCALE GENOMIC DNA]</scope>
    <source>
        <strain>RKS4594</strain>
    </source>
</reference>
<evidence type="ECO:0000255" key="1">
    <source>
        <dbReference type="HAMAP-Rule" id="MF_00539"/>
    </source>
</evidence>
<evidence type="ECO:0000256" key="2">
    <source>
        <dbReference type="SAM" id="MobiDB-lite"/>
    </source>
</evidence>
<evidence type="ECO:0000305" key="3"/>
<proteinExistence type="inferred from homology"/>
<keyword id="KW-0687">Ribonucleoprotein</keyword>
<keyword id="KW-0689">Ribosomal protein</keyword>
<dbReference type="EMBL" id="CP000857">
    <property type="protein sequence ID" value="ACN47457.1"/>
    <property type="molecule type" value="Genomic_DNA"/>
</dbReference>
<dbReference type="RefSeq" id="WP_000940593.1">
    <property type="nucleotide sequence ID" value="NC_012125.1"/>
</dbReference>
<dbReference type="SMR" id="C0PZJ7"/>
<dbReference type="GeneID" id="66757642"/>
<dbReference type="KEGG" id="sei:SPC_3372"/>
<dbReference type="HOGENOM" id="CLU_095424_4_1_6"/>
<dbReference type="Proteomes" id="UP000001599">
    <property type="component" value="Chromosome"/>
</dbReference>
<dbReference type="GO" id="GO:0022625">
    <property type="term" value="C:cytosolic large ribosomal subunit"/>
    <property type="evidence" value="ECO:0007669"/>
    <property type="project" value="TreeGrafter"/>
</dbReference>
<dbReference type="GO" id="GO:0003735">
    <property type="term" value="F:structural constituent of ribosome"/>
    <property type="evidence" value="ECO:0007669"/>
    <property type="project" value="InterPro"/>
</dbReference>
<dbReference type="GO" id="GO:0006412">
    <property type="term" value="P:translation"/>
    <property type="evidence" value="ECO:0007669"/>
    <property type="project" value="UniProtKB-UniRule"/>
</dbReference>
<dbReference type="FunFam" id="2.40.50.100:FF:000001">
    <property type="entry name" value="50S ribosomal protein L27"/>
    <property type="match status" value="1"/>
</dbReference>
<dbReference type="Gene3D" id="2.40.50.100">
    <property type="match status" value="1"/>
</dbReference>
<dbReference type="HAMAP" id="MF_00539">
    <property type="entry name" value="Ribosomal_bL27"/>
    <property type="match status" value="1"/>
</dbReference>
<dbReference type="InterPro" id="IPR001684">
    <property type="entry name" value="Ribosomal_bL27"/>
</dbReference>
<dbReference type="InterPro" id="IPR018261">
    <property type="entry name" value="Ribosomal_bL27_CS"/>
</dbReference>
<dbReference type="NCBIfam" id="TIGR00062">
    <property type="entry name" value="L27"/>
    <property type="match status" value="1"/>
</dbReference>
<dbReference type="PANTHER" id="PTHR15893:SF0">
    <property type="entry name" value="LARGE RIBOSOMAL SUBUNIT PROTEIN BL27M"/>
    <property type="match status" value="1"/>
</dbReference>
<dbReference type="PANTHER" id="PTHR15893">
    <property type="entry name" value="RIBOSOMAL PROTEIN L27"/>
    <property type="match status" value="1"/>
</dbReference>
<dbReference type="Pfam" id="PF01016">
    <property type="entry name" value="Ribosomal_L27"/>
    <property type="match status" value="1"/>
</dbReference>
<dbReference type="PRINTS" id="PR00063">
    <property type="entry name" value="RIBOSOMALL27"/>
</dbReference>
<dbReference type="SUPFAM" id="SSF110324">
    <property type="entry name" value="Ribosomal L27 protein-like"/>
    <property type="match status" value="1"/>
</dbReference>
<dbReference type="PROSITE" id="PS00831">
    <property type="entry name" value="RIBOSOMAL_L27"/>
    <property type="match status" value="1"/>
</dbReference>
<comment type="similarity">
    <text evidence="1">Belongs to the bacterial ribosomal protein bL27 family.</text>
</comment>
<organism>
    <name type="scientific">Salmonella paratyphi C (strain RKS4594)</name>
    <dbReference type="NCBI Taxonomy" id="476213"/>
    <lineage>
        <taxon>Bacteria</taxon>
        <taxon>Pseudomonadati</taxon>
        <taxon>Pseudomonadota</taxon>
        <taxon>Gammaproteobacteria</taxon>
        <taxon>Enterobacterales</taxon>
        <taxon>Enterobacteriaceae</taxon>
        <taxon>Salmonella</taxon>
    </lineage>
</organism>
<name>RL27_SALPC</name>
<sequence length="85" mass="9125">MAHKKAGGSTRNGRDSEAKRLGVKRFGGEAVLAGSIIVRQRGTKFHAGTNVGCGRDHTLFAKADGKVKFEVKGPKNRKYISIVAE</sequence>
<feature type="chain" id="PRO_1000195884" description="Large ribosomal subunit protein bL27">
    <location>
        <begin position="1"/>
        <end position="85"/>
    </location>
</feature>
<feature type="region of interest" description="Disordered" evidence="2">
    <location>
        <begin position="1"/>
        <end position="20"/>
    </location>
</feature>
<protein>
    <recommendedName>
        <fullName evidence="1">Large ribosomal subunit protein bL27</fullName>
    </recommendedName>
    <alternativeName>
        <fullName evidence="3">50S ribosomal protein L27</fullName>
    </alternativeName>
</protein>
<accession>C0PZJ7</accession>
<gene>
    <name evidence="1" type="primary">rpmA</name>
    <name type="ordered locus">SPC_3372</name>
</gene>